<accession>P47068</accession>
<accession>D6VWG0</accession>
<accession>P47067</accession>
<accession>Q8X1F4</accession>
<reference key="1">
    <citation type="journal article" date="1996" name="EMBO J.">
        <title>Complete nucleotide sequence of Saccharomyces cerevisiae chromosome X.</title>
        <authorList>
            <person name="Galibert F."/>
            <person name="Alexandraki D."/>
            <person name="Baur A."/>
            <person name="Boles E."/>
            <person name="Chalwatzis N."/>
            <person name="Chuat J.-C."/>
            <person name="Coster F."/>
            <person name="Cziepluch C."/>
            <person name="de Haan M."/>
            <person name="Domdey H."/>
            <person name="Durand P."/>
            <person name="Entian K.-D."/>
            <person name="Gatius M."/>
            <person name="Goffeau A."/>
            <person name="Grivell L.A."/>
            <person name="Hennemann A."/>
            <person name="Herbert C.J."/>
            <person name="Heumann K."/>
            <person name="Hilger F."/>
            <person name="Hollenberg C.P."/>
            <person name="Huang M.-E."/>
            <person name="Jacq C."/>
            <person name="Jauniaux J.-C."/>
            <person name="Katsoulou C."/>
            <person name="Kirchrath L."/>
            <person name="Kleine K."/>
            <person name="Kordes E."/>
            <person name="Koetter P."/>
            <person name="Liebl S."/>
            <person name="Louis E.J."/>
            <person name="Manus V."/>
            <person name="Mewes H.-W."/>
            <person name="Miosga T."/>
            <person name="Obermaier B."/>
            <person name="Perea J."/>
            <person name="Pohl T.M."/>
            <person name="Portetelle D."/>
            <person name="Pujol A."/>
            <person name="Purnelle B."/>
            <person name="Ramezani Rad M."/>
            <person name="Rasmussen S.W."/>
            <person name="Rose M."/>
            <person name="Rossau R."/>
            <person name="Schaaff-Gerstenschlaeger I."/>
            <person name="Smits P.H.M."/>
            <person name="Scarcez T."/>
            <person name="Soriano N."/>
            <person name="To Van D."/>
            <person name="Tzermia M."/>
            <person name="Van Broekhoven A."/>
            <person name="Vandenbol M."/>
            <person name="Wedler H."/>
            <person name="von Wettstein D."/>
            <person name="Wambutt R."/>
            <person name="Zagulski M."/>
            <person name="Zollner A."/>
            <person name="Karpfinger-Hartl L."/>
        </authorList>
    </citation>
    <scope>NUCLEOTIDE SEQUENCE [LARGE SCALE GENOMIC DNA]</scope>
    <source>
        <strain>ATCC 204508 / S288c</strain>
    </source>
</reference>
<reference key="2">
    <citation type="journal article" date="2014" name="G3 (Bethesda)">
        <title>The reference genome sequence of Saccharomyces cerevisiae: Then and now.</title>
        <authorList>
            <person name="Engel S.R."/>
            <person name="Dietrich F.S."/>
            <person name="Fisk D.G."/>
            <person name="Binkley G."/>
            <person name="Balakrishnan R."/>
            <person name="Costanzo M.C."/>
            <person name="Dwight S.S."/>
            <person name="Hitz B.C."/>
            <person name="Karra K."/>
            <person name="Nash R.S."/>
            <person name="Weng S."/>
            <person name="Wong E.D."/>
            <person name="Lloyd P."/>
            <person name="Skrzypek M.S."/>
            <person name="Miyasato S.R."/>
            <person name="Simison M."/>
            <person name="Cherry J.M."/>
        </authorList>
    </citation>
    <scope>GENOME REANNOTATION</scope>
    <source>
        <strain>ATCC 204508 / S288c</strain>
    </source>
</reference>
<reference key="3">
    <citation type="journal article" date="2002" name="Genetics">
        <title>The novel adaptor protein, Mti1p, and Vrp1p, a homolog of Wiskott-Aldrich syndrome protein-interacting protein (WIP), may antagonistically regulate type I myosins in Saccharomyces cerevisiae.</title>
        <authorList>
            <person name="Mochida J."/>
            <person name="Yamamoto T."/>
            <person name="Fujimura-Kamada K."/>
            <person name="Tanaka K."/>
        </authorList>
    </citation>
    <scope>NUCLEOTIDE SEQUENCE [GENOMIC DNA] OF 699-765</scope>
    <scope>FUNCTION</scope>
    <scope>SUBUNIT</scope>
    <scope>SUBCELLULAR LOCATION</scope>
</reference>
<reference key="4">
    <citation type="submission" date="1995-09" db="EMBL/GenBank/DDBJ databases">
        <authorList>
            <person name="Pohl T.M."/>
            <person name="Aljinovic G."/>
        </authorList>
    </citation>
    <scope>NUCLEOTIDE SEQUENCE [GENOMIC DNA] OF 775-1157</scope>
</reference>
<reference key="5">
    <citation type="journal article" date="2005" name="Mol. Cell. Proteomics">
        <title>Quantitative phosphoproteomics applied to the yeast pheromone signaling pathway.</title>
        <authorList>
            <person name="Gruhler A."/>
            <person name="Olsen J.V."/>
            <person name="Mohammed S."/>
            <person name="Mortensen P."/>
            <person name="Faergeman N.J."/>
            <person name="Mann M."/>
            <person name="Jensen O.N."/>
        </authorList>
    </citation>
    <scope>PHOSPHORYLATION [LARGE SCALE ANALYSIS] AT SER-631 AND SER-638</scope>
    <scope>IDENTIFICATION BY MASS SPECTROMETRY [LARGE SCALE ANALYSIS]</scope>
    <source>
        <strain>YAL6B</strain>
    </source>
</reference>
<reference key="6">
    <citation type="journal article" date="2007" name="J. Proteome Res.">
        <title>Large-scale phosphorylation analysis of alpha-factor-arrested Saccharomyces cerevisiae.</title>
        <authorList>
            <person name="Li X."/>
            <person name="Gerber S.A."/>
            <person name="Rudner A.D."/>
            <person name="Beausoleil S.A."/>
            <person name="Haas W."/>
            <person name="Villen J."/>
            <person name="Elias J.E."/>
            <person name="Gygi S.P."/>
        </authorList>
    </citation>
    <scope>PHOSPHORYLATION [LARGE SCALE ANALYSIS] AT SER-103; SER-158; SER-166; SER-565; SER-621; SER-631; SER-634; SER-638; THR-894 AND THR-895</scope>
    <scope>IDENTIFICATION BY MASS SPECTROMETRY [LARGE SCALE ANALYSIS]</scope>
    <source>
        <strain>ADR376</strain>
    </source>
</reference>
<reference key="7">
    <citation type="journal article" date="2007" name="Proc. Natl. Acad. Sci. U.S.A.">
        <title>Analysis of phosphorylation sites on proteins from Saccharomyces cerevisiae by electron transfer dissociation (ETD) mass spectrometry.</title>
        <authorList>
            <person name="Chi A."/>
            <person name="Huttenhower C."/>
            <person name="Geer L.Y."/>
            <person name="Coon J.J."/>
            <person name="Syka J.E.P."/>
            <person name="Bai D.L."/>
            <person name="Shabanowitz J."/>
            <person name="Burke D.J."/>
            <person name="Troyanskaya O.G."/>
            <person name="Hunt D.F."/>
        </authorList>
    </citation>
    <scope>PHOSPHORYLATION [LARGE SCALE ANALYSIS] AT SER-103; SER-158 AND SER-889</scope>
    <scope>IDENTIFICATION BY MASS SPECTROMETRY [LARGE SCALE ANALYSIS]</scope>
</reference>
<reference key="8">
    <citation type="journal article" date="2008" name="Mol. Cell. Proteomics">
        <title>A multidimensional chromatography technology for in-depth phosphoproteome analysis.</title>
        <authorList>
            <person name="Albuquerque C.P."/>
            <person name="Smolka M.B."/>
            <person name="Payne S.H."/>
            <person name="Bafna V."/>
            <person name="Eng J."/>
            <person name="Zhou H."/>
        </authorList>
    </citation>
    <scope>PHOSPHORYLATION [LARGE SCALE ANALYSIS] AT SER-103; SER-166; SER-565 AND SER-647</scope>
    <scope>IDENTIFICATION BY MASS SPECTROMETRY [LARGE SCALE ANALYSIS]</scope>
</reference>
<reference key="9">
    <citation type="journal article" date="2009" name="Science">
        <title>Global analysis of Cdk1 substrate phosphorylation sites provides insights into evolution.</title>
        <authorList>
            <person name="Holt L.J."/>
            <person name="Tuch B.B."/>
            <person name="Villen J."/>
            <person name="Johnson A.D."/>
            <person name="Gygi S.P."/>
            <person name="Morgan D.O."/>
        </authorList>
    </citation>
    <scope>PHOSPHORYLATION [LARGE SCALE ANALYSIS] AT SER-103; SER-158; SER-166; SER-565; SER-621; SER-631; SER-634; THR-636; SER-638; SER-647; THR-850; THR-894 AND THR-895</scope>
    <scope>IDENTIFICATION BY MASS SPECTROMETRY [LARGE SCALE ANALYSIS]</scope>
</reference>
<reference key="10">
    <citation type="journal article" date="2012" name="Proteomics">
        <title>Sites of ubiquitin attachment in Saccharomyces cerevisiae.</title>
        <authorList>
            <person name="Starita L.M."/>
            <person name="Lo R.S."/>
            <person name="Eng J.K."/>
            <person name="von Haller P.D."/>
            <person name="Fields S."/>
        </authorList>
    </citation>
    <scope>UBIQUITINATION [LARGE SCALE ANALYSIS] AT LYS-1012</scope>
    <scope>IDENTIFICATION BY MASS SPECTROMETRY [LARGE SCALE ANALYSIS]</scope>
</reference>
<protein>
    <recommendedName>
        <fullName>Myosin tail region-interacting protein MTI1</fullName>
    </recommendedName>
    <alternativeName>
        <fullName>Protein BBC1</fullName>
    </alternativeName>
</protein>
<feature type="chain" id="PRO_0000064839" description="Myosin tail region-interacting protein MTI1">
    <location>
        <begin position="1"/>
        <end position="1157"/>
    </location>
</feature>
<feature type="domain" description="SH3" evidence="2">
    <location>
        <begin position="5"/>
        <end position="69"/>
    </location>
</feature>
<feature type="region of interest" description="Disordered" evidence="3">
    <location>
        <begin position="68"/>
        <end position="116"/>
    </location>
</feature>
<feature type="region of interest" description="Disordered" evidence="3">
    <location>
        <begin position="135"/>
        <end position="156"/>
    </location>
</feature>
<feature type="region of interest" description="Disordered" evidence="3">
    <location>
        <begin position="231"/>
        <end position="256"/>
    </location>
</feature>
<feature type="region of interest" description="Disordered" evidence="3">
    <location>
        <begin position="284"/>
        <end position="888"/>
    </location>
</feature>
<feature type="coiled-coil region" evidence="1">
    <location>
        <begin position="234"/>
        <end position="301"/>
    </location>
</feature>
<feature type="coiled-coil region" evidence="1">
    <location>
        <begin position="356"/>
        <end position="430"/>
    </location>
</feature>
<feature type="compositionally biased region" description="Polar residues" evidence="3">
    <location>
        <begin position="77"/>
        <end position="89"/>
    </location>
</feature>
<feature type="compositionally biased region" description="Basic and acidic residues" evidence="3">
    <location>
        <begin position="93"/>
        <end position="110"/>
    </location>
</feature>
<feature type="compositionally biased region" description="Polar residues" evidence="3">
    <location>
        <begin position="138"/>
        <end position="149"/>
    </location>
</feature>
<feature type="compositionally biased region" description="Basic and acidic residues" evidence="3">
    <location>
        <begin position="242"/>
        <end position="256"/>
    </location>
</feature>
<feature type="compositionally biased region" description="Basic and acidic residues" evidence="3">
    <location>
        <begin position="284"/>
        <end position="296"/>
    </location>
</feature>
<feature type="compositionally biased region" description="Basic and acidic residues" evidence="3">
    <location>
        <begin position="312"/>
        <end position="383"/>
    </location>
</feature>
<feature type="compositionally biased region" description="Acidic residues" evidence="3">
    <location>
        <begin position="398"/>
        <end position="411"/>
    </location>
</feature>
<feature type="compositionally biased region" description="Basic and acidic residues" evidence="3">
    <location>
        <begin position="412"/>
        <end position="423"/>
    </location>
</feature>
<feature type="compositionally biased region" description="Basic and acidic residues" evidence="3">
    <location>
        <begin position="506"/>
        <end position="524"/>
    </location>
</feature>
<feature type="compositionally biased region" description="Acidic residues" evidence="3">
    <location>
        <begin position="544"/>
        <end position="558"/>
    </location>
</feature>
<feature type="compositionally biased region" description="Low complexity" evidence="3">
    <location>
        <begin position="574"/>
        <end position="585"/>
    </location>
</feature>
<feature type="compositionally biased region" description="Basic and acidic residues" evidence="3">
    <location>
        <begin position="597"/>
        <end position="606"/>
    </location>
</feature>
<feature type="compositionally biased region" description="Polar residues" evidence="3">
    <location>
        <begin position="607"/>
        <end position="641"/>
    </location>
</feature>
<feature type="compositionally biased region" description="Basic and acidic residues" evidence="3">
    <location>
        <begin position="642"/>
        <end position="653"/>
    </location>
</feature>
<feature type="compositionally biased region" description="Polar residues" evidence="3">
    <location>
        <begin position="654"/>
        <end position="668"/>
    </location>
</feature>
<feature type="compositionally biased region" description="Pro residues" evidence="3">
    <location>
        <begin position="691"/>
        <end position="738"/>
    </location>
</feature>
<feature type="compositionally biased region" description="Pro residues" evidence="3">
    <location>
        <begin position="747"/>
        <end position="765"/>
    </location>
</feature>
<feature type="compositionally biased region" description="Basic and acidic residues" evidence="3">
    <location>
        <begin position="769"/>
        <end position="778"/>
    </location>
</feature>
<feature type="compositionally biased region" description="Pro residues" evidence="3">
    <location>
        <begin position="795"/>
        <end position="808"/>
    </location>
</feature>
<feature type="compositionally biased region" description="Polar residues" evidence="3">
    <location>
        <begin position="832"/>
        <end position="853"/>
    </location>
</feature>
<feature type="modified residue" description="Phosphoserine" evidence="7 8 9 10">
    <location>
        <position position="103"/>
    </location>
</feature>
<feature type="modified residue" description="Phosphoserine" evidence="7 8 10">
    <location>
        <position position="158"/>
    </location>
</feature>
<feature type="modified residue" description="Phosphoserine" evidence="8 9 10">
    <location>
        <position position="166"/>
    </location>
</feature>
<feature type="modified residue" description="Phosphoserine" evidence="8 9 10">
    <location>
        <position position="565"/>
    </location>
</feature>
<feature type="modified residue" description="Phosphoserine" evidence="8 10">
    <location>
        <position position="621"/>
    </location>
</feature>
<feature type="modified residue" description="Phosphoserine" evidence="6 8 10">
    <location>
        <position position="631"/>
    </location>
</feature>
<feature type="modified residue" description="Phosphoserine" evidence="8 10">
    <location>
        <position position="634"/>
    </location>
</feature>
<feature type="modified residue" description="Phosphothreonine" evidence="10">
    <location>
        <position position="636"/>
    </location>
</feature>
<feature type="modified residue" description="Phosphoserine" evidence="6 8 10">
    <location>
        <position position="638"/>
    </location>
</feature>
<feature type="modified residue" description="Phosphoserine" evidence="9 10">
    <location>
        <position position="647"/>
    </location>
</feature>
<feature type="modified residue" description="Phosphothreonine" evidence="10">
    <location>
        <position position="850"/>
    </location>
</feature>
<feature type="modified residue" description="Phosphoserine" evidence="7">
    <location>
        <position position="889"/>
    </location>
</feature>
<feature type="modified residue" description="Phosphothreonine" evidence="8 10">
    <location>
        <position position="894"/>
    </location>
</feature>
<feature type="modified residue" description="Phosphothreonine" evidence="8 10">
    <location>
        <position position="895"/>
    </location>
</feature>
<feature type="cross-link" description="Glycyl lysine isopeptide (Lys-Gly) (interchain with G-Cter in ubiquitin)" evidence="11">
    <location>
        <position position="1012"/>
    </location>
</feature>
<feature type="strand" evidence="12">
    <location>
        <begin position="6"/>
        <end position="14"/>
    </location>
</feature>
<feature type="strand" evidence="13">
    <location>
        <begin position="21"/>
        <end position="23"/>
    </location>
</feature>
<feature type="strand" evidence="12">
    <location>
        <begin position="31"/>
        <end position="37"/>
    </location>
</feature>
<feature type="strand" evidence="12">
    <location>
        <begin position="39"/>
        <end position="48"/>
    </location>
</feature>
<feature type="strand" evidence="12">
    <location>
        <begin position="54"/>
        <end position="60"/>
    </location>
</feature>
<feature type="helix" evidence="12">
    <location>
        <begin position="61"/>
        <end position="63"/>
    </location>
</feature>
<feature type="strand" evidence="12">
    <location>
        <begin position="64"/>
        <end position="66"/>
    </location>
</feature>
<organism>
    <name type="scientific">Saccharomyces cerevisiae (strain ATCC 204508 / S288c)</name>
    <name type="common">Baker's yeast</name>
    <dbReference type="NCBI Taxonomy" id="559292"/>
    <lineage>
        <taxon>Eukaryota</taxon>
        <taxon>Fungi</taxon>
        <taxon>Dikarya</taxon>
        <taxon>Ascomycota</taxon>
        <taxon>Saccharomycotina</taxon>
        <taxon>Saccharomycetes</taxon>
        <taxon>Saccharomycetales</taxon>
        <taxon>Saccharomycetaceae</taxon>
        <taxon>Saccharomyces</taxon>
    </lineage>
</organism>
<keyword id="KW-0002">3D-structure</keyword>
<keyword id="KW-0175">Coiled coil</keyword>
<keyword id="KW-0963">Cytoplasm</keyword>
<keyword id="KW-0206">Cytoskeleton</keyword>
<keyword id="KW-1017">Isopeptide bond</keyword>
<keyword id="KW-0597">Phosphoprotein</keyword>
<keyword id="KW-1185">Reference proteome</keyword>
<keyword id="KW-0728">SH3 domain</keyword>
<keyword id="KW-0832">Ubl conjugation</keyword>
<evidence type="ECO:0000255" key="1"/>
<evidence type="ECO:0000255" key="2">
    <source>
        <dbReference type="PROSITE-ProRule" id="PRU00192"/>
    </source>
</evidence>
<evidence type="ECO:0000256" key="3">
    <source>
        <dbReference type="SAM" id="MobiDB-lite"/>
    </source>
</evidence>
<evidence type="ECO:0000269" key="4">
    <source>
    </source>
</evidence>
<evidence type="ECO:0000305" key="5"/>
<evidence type="ECO:0007744" key="6">
    <source>
    </source>
</evidence>
<evidence type="ECO:0007744" key="7">
    <source>
    </source>
</evidence>
<evidence type="ECO:0007744" key="8">
    <source>
    </source>
</evidence>
<evidence type="ECO:0007744" key="9">
    <source>
    </source>
</evidence>
<evidence type="ECO:0007744" key="10">
    <source>
    </source>
</evidence>
<evidence type="ECO:0007744" key="11">
    <source>
    </source>
</evidence>
<evidence type="ECO:0007829" key="12">
    <source>
        <dbReference type="PDB" id="1TG0"/>
    </source>
</evidence>
<evidence type="ECO:0007829" key="13">
    <source>
        <dbReference type="PDB" id="1WDX"/>
    </source>
</evidence>
<sequence length="1157" mass="128297">MSEPEVPFKVVAQFPYKSDYEDDLNFEKDQEIIVTSVEDAEWYFGEYQDSNGDVIEGIFPKSFVAVQGSEVGKEAESSPNTGSTEQRTIQPEVEQKDLPEPISPETKKETLSGPVPVPAATVPVPAATVPVPAATAVSAQVQHDSSSGNGERKVPMDSPKLKARLSMFNQDITEQVPLPKSTHLDLENIPVKKTIVADAPKYYVPPGIPTNDTSNLERKKSLKENEKKIVPEPINRAQVESGRIETENDQLKKDLPQMSLKERIALLQEQQRLQAAREEELLRKKAKLEQEHERSAVNKNEPYTETEEAEENEKTEPKPEFTPETEHNEEPQMELLAHKEITKTSREADEGTNDIEKEQFLDEYTKENQKVEESQADEARGENVAEESEIGYGHEDREGDNDEEKEEEDSEENRRAALRERMAKLSGASRFGAPVGFNPFGMASGVGNKPSEEPKKKQHKEKEEEEPEQLQELPRAIPVMPFVDPSSNPFFRKSNLSEKNQPTETKTLDPHATTEHEQKQEHGTHAYHNLAAVDNAHPEYSDHDSDEDTDDHEFEDANDGLRKHSMVEQAFQIGNNESENVNSGEKIYPQEPPISHRTAEVSHDIENSSQNTTGNVLPVSSPQTRVARNGSINSLTKSISGENRRKSINEYHDTVSTNSSALTETAQDISMAAPAAPVLSKVSHPEDKVPPHPVPSAPSAPPVPSAPSVPSAPPVPPAPPALSAPSVPPVPPVPPVSSAPPALSAPSIPPVPPTPPAPPAPPAPLALPKHNEVEEHVKSSAPLPPVSEEYHPMPNTAPPLPRAPPVPPATFEFDSEPTATHSHTAPSPPPHQNVTASTPSMMSTQQRVPTSVLSGAEKESRTLPPHVPSLTNRPVDSFHESDTTPKVASIRRSTTHDVGEISNNVKIEFNAQERWWINKSAPPAISNLKLNFLMEIDDHFISKRLHQKWVVRDFYFLFENYSQLRFSLTFNSTSPEKTVTTLQERFPSPVETQSARILDEYAQRFNAKVVEKSHSLINSHIGAKNFVSQIVSEFKDEVIQPIGARTFGATILSYKPEEGIEQLMKSLQKIKPGDILVIRKAKFEAHKKIGKNEIINVGMDSAAPYSSVVTDYDFTKNKFRVIENHEGKIIQNSYKLSHMKSGKLKVFRIVARGYVGW</sequence>
<dbReference type="EMBL" id="Z49295">
    <property type="protein sequence ID" value="CAA89311.1"/>
    <property type="status" value="ALT_FRAME"/>
    <property type="molecule type" value="Genomic_DNA"/>
</dbReference>
<dbReference type="EMBL" id="Z49296">
    <property type="protein sequence ID" value="CAA89312.1"/>
    <property type="status" value="ALT_INIT"/>
    <property type="molecule type" value="Genomic_DNA"/>
</dbReference>
<dbReference type="EMBL" id="AF373805">
    <property type="protein sequence ID" value="AAL57239.1"/>
    <property type="molecule type" value="Genomic_DNA"/>
</dbReference>
<dbReference type="EMBL" id="BK006943">
    <property type="protein sequence ID" value="DAA08776.1"/>
    <property type="molecule type" value="Genomic_DNA"/>
</dbReference>
<dbReference type="PIR" id="S56791">
    <property type="entry name" value="S56791"/>
</dbReference>
<dbReference type="PIR" id="S56792">
    <property type="entry name" value="S56792"/>
</dbReference>
<dbReference type="RefSeq" id="NP_012514.2">
    <property type="nucleotide sequence ID" value="NM_001181454.1"/>
</dbReference>
<dbReference type="PDB" id="1TG0">
    <property type="method" value="X-ray"/>
    <property type="resolution" value="0.97 A"/>
    <property type="chains" value="A=1-68"/>
</dbReference>
<dbReference type="PDB" id="1WDX">
    <property type="method" value="X-ray"/>
    <property type="resolution" value="2.50 A"/>
    <property type="chains" value="A/B/C/D=1-68"/>
</dbReference>
<dbReference type="PDB" id="1ZUK">
    <property type="method" value="X-ray"/>
    <property type="resolution" value="1.90 A"/>
    <property type="chains" value="A/B=1-68"/>
</dbReference>
<dbReference type="PDB" id="2DYF">
    <property type="method" value="NMR"/>
    <property type="chains" value="B=796-802"/>
</dbReference>
<dbReference type="PDBsum" id="1TG0"/>
<dbReference type="PDBsum" id="1WDX"/>
<dbReference type="PDBsum" id="1ZUK"/>
<dbReference type="PDBsum" id="2DYF"/>
<dbReference type="SMR" id="P47068"/>
<dbReference type="BioGRID" id="33738">
    <property type="interactions" value="203"/>
</dbReference>
<dbReference type="DIP" id="DIP-6279N"/>
<dbReference type="FunCoup" id="P47068">
    <property type="interactions" value="261"/>
</dbReference>
<dbReference type="IntAct" id="P47068">
    <property type="interactions" value="82"/>
</dbReference>
<dbReference type="MINT" id="P47068"/>
<dbReference type="STRING" id="4932.YJL020C"/>
<dbReference type="MoonDB" id="P47068">
    <property type="type" value="Predicted"/>
</dbReference>
<dbReference type="GlyGen" id="P47068">
    <property type="glycosylation" value="5 sites, 1 O-linked glycan (4 sites)"/>
</dbReference>
<dbReference type="iPTMnet" id="P47068"/>
<dbReference type="PaxDb" id="4932-YJL020C"/>
<dbReference type="PeptideAtlas" id="P47068"/>
<dbReference type="EnsemblFungi" id="YJL020C_mRNA">
    <property type="protein sequence ID" value="YJL020C"/>
    <property type="gene ID" value="YJL020C"/>
</dbReference>
<dbReference type="GeneID" id="853433"/>
<dbReference type="KEGG" id="sce:YJL020C"/>
<dbReference type="AGR" id="SGD:S000003557"/>
<dbReference type="SGD" id="S000003557">
    <property type="gene designation" value="BBC1"/>
</dbReference>
<dbReference type="VEuPathDB" id="FungiDB:YJL020C"/>
<dbReference type="eggNOG" id="ENOG502QQMM">
    <property type="taxonomic scope" value="Eukaryota"/>
</dbReference>
<dbReference type="HOGENOM" id="CLU_003021_0_0_1"/>
<dbReference type="InParanoid" id="P47068"/>
<dbReference type="OMA" id="KAIFEYK"/>
<dbReference type="OrthoDB" id="207120at2759"/>
<dbReference type="BioCyc" id="YEAST:G3O-31492-MONOMER"/>
<dbReference type="BioGRID-ORCS" id="853433">
    <property type="hits" value="8 hits in 10 CRISPR screens"/>
</dbReference>
<dbReference type="EvolutionaryTrace" id="P47068"/>
<dbReference type="PRO" id="PR:P47068"/>
<dbReference type="Proteomes" id="UP000002311">
    <property type="component" value="Chromosome X"/>
</dbReference>
<dbReference type="RNAct" id="P47068">
    <property type="molecule type" value="protein"/>
</dbReference>
<dbReference type="GO" id="GO:0030479">
    <property type="term" value="C:actin cortical patch"/>
    <property type="evidence" value="ECO:0000314"/>
    <property type="project" value="SGD"/>
</dbReference>
<dbReference type="GO" id="GO:0005730">
    <property type="term" value="C:nucleolus"/>
    <property type="evidence" value="ECO:0000318"/>
    <property type="project" value="GO_Central"/>
</dbReference>
<dbReference type="GO" id="GO:0017024">
    <property type="term" value="F:myosin I binding"/>
    <property type="evidence" value="ECO:0000353"/>
    <property type="project" value="UniProtKB"/>
</dbReference>
<dbReference type="GO" id="GO:0032032">
    <property type="term" value="F:myosin I tail binding"/>
    <property type="evidence" value="ECO:0000314"/>
    <property type="project" value="SGD"/>
</dbReference>
<dbReference type="GO" id="GO:0030036">
    <property type="term" value="P:actin cytoskeleton organization"/>
    <property type="evidence" value="ECO:0000316"/>
    <property type="project" value="SGD"/>
</dbReference>
<dbReference type="GO" id="GO:0007010">
    <property type="term" value="P:cytoskeleton organization"/>
    <property type="evidence" value="ECO:0000316"/>
    <property type="project" value="UniProtKB"/>
</dbReference>
<dbReference type="GO" id="GO:0034316">
    <property type="term" value="P:negative regulation of Arp2/3 complex-mediated actin nucleation"/>
    <property type="evidence" value="ECO:0000314"/>
    <property type="project" value="SGD"/>
</dbReference>
<dbReference type="CDD" id="cd11887">
    <property type="entry name" value="SH3_Bbc1"/>
    <property type="match status" value="1"/>
</dbReference>
<dbReference type="FunFam" id="2.30.30.40:FF:000316">
    <property type="entry name" value="Myosin tail region-interacting protein MTI1"/>
    <property type="match status" value="1"/>
</dbReference>
<dbReference type="Gene3D" id="2.30.30.40">
    <property type="entry name" value="SH3 Domains"/>
    <property type="match status" value="1"/>
</dbReference>
<dbReference type="InterPro" id="IPR035552">
    <property type="entry name" value="Mti1_SH3"/>
</dbReference>
<dbReference type="InterPro" id="IPR036028">
    <property type="entry name" value="SH3-like_dom_sf"/>
</dbReference>
<dbReference type="InterPro" id="IPR001452">
    <property type="entry name" value="SH3_domain"/>
</dbReference>
<dbReference type="Pfam" id="PF25459">
    <property type="entry name" value="AIM3_BBC1_C"/>
    <property type="match status" value="1"/>
</dbReference>
<dbReference type="Pfam" id="PF00018">
    <property type="entry name" value="SH3_1"/>
    <property type="match status" value="1"/>
</dbReference>
<dbReference type="SMART" id="SM00326">
    <property type="entry name" value="SH3"/>
    <property type="match status" value="1"/>
</dbReference>
<dbReference type="SUPFAM" id="SSF50044">
    <property type="entry name" value="SH3-domain"/>
    <property type="match status" value="1"/>
</dbReference>
<dbReference type="PROSITE" id="PS50002">
    <property type="entry name" value="SH3"/>
    <property type="match status" value="1"/>
</dbReference>
<name>BBC1_YEAST</name>
<proteinExistence type="evidence at protein level"/>
<gene>
    <name type="primary">BBC1</name>
    <name type="synonym">MTI1</name>
    <name type="ordered locus">YJL020C</name>
    <name type="ORF">J1286</name>
    <name type="ORF">J1305</name>
    <name type="ORF">YJL021C</name>
</gene>
<comment type="function">
    <text evidence="4">Involved in the regulation of actin cytoskeleton.</text>
</comment>
<comment type="subunit">
    <text evidence="4">Binds to the SH3 domains of the type I myosins MYO3 and MYO5.</text>
</comment>
<comment type="interaction">
    <interactant intactId="EBI-3437">
        <id>P47068</id>
    </interactant>
    <interactant intactId="EBI-25376">
        <id>P40563</id>
        <label>AIM21</label>
    </interactant>
    <organismsDiffer>false</organismsDiffer>
    <experiments>9</experiments>
</comment>
<comment type="interaction">
    <interactant intactId="EBI-3437">
        <id>P47068</id>
    </interactant>
    <interactant intactId="EBI-28798">
        <id>P53933</id>
        <label>APP1</label>
    </interactant>
    <organismsDiffer>false</organismsDiffer>
    <experiments>3</experiments>
</comment>
<comment type="interaction">
    <interactant intactId="EBI-3437">
        <id>P47068</id>
    </interactant>
    <interactant intactId="EBI-3889">
        <id>P38822</id>
        <label>BZZ1</label>
    </interactant>
    <organismsDiffer>false</organismsDiffer>
    <experiments>2</experiments>
</comment>
<comment type="interaction">
    <interactant intactId="EBI-3437">
        <id>P47068</id>
    </interactant>
    <interactant intactId="EBI-11670">
        <id>P36006</id>
        <label>MYO3</label>
    </interactant>
    <organismsDiffer>false</organismsDiffer>
    <experiments>5</experiments>
</comment>
<comment type="interaction">
    <interactant intactId="EBI-3437">
        <id>P47068</id>
    </interactant>
    <interactant intactId="EBI-11687">
        <id>Q04439</id>
        <label>MYO5</label>
    </interactant>
    <organismsDiffer>false</organismsDiffer>
    <experiments>6</experiments>
</comment>
<comment type="interaction">
    <interactant intactId="EBI-3437">
        <id>P47068</id>
    </interactant>
    <interactant intactId="EBI-37290">
        <id>Q06833</id>
        <label>NVJ2</label>
    </interactant>
    <organismsDiffer>false</organismsDiffer>
    <experiments>2</experiments>
</comment>
<comment type="subcellular location">
    <subcellularLocation>
        <location evidence="4">Cytoplasm</location>
        <location evidence="4">Cytoskeleton</location>
        <location evidence="4">Actin patch</location>
    </subcellularLocation>
    <text>Colocalizes with cortical actin patches.</text>
</comment>
<comment type="sequence caution" evidence="5">
    <conflict type="frameshift">
        <sequence resource="EMBL-CDS" id="CAA89311"/>
    </conflict>
</comment>
<comment type="sequence caution" evidence="5">
    <conflict type="erroneous initiation">
        <sequence resource="EMBL-CDS" id="CAA89312"/>
    </conflict>
</comment>